<feature type="chain" id="PRO_1000095719" description="Tryptophan synthase alpha chain">
    <location>
        <begin position="1"/>
        <end position="276"/>
    </location>
</feature>
<feature type="active site" description="Proton acceptor" evidence="1">
    <location>
        <position position="46"/>
    </location>
</feature>
<feature type="active site" description="Proton acceptor" evidence="1">
    <location>
        <position position="57"/>
    </location>
</feature>
<organism>
    <name type="scientific">Halobacterium salinarum (strain ATCC 29341 / DSM 671 / R1)</name>
    <dbReference type="NCBI Taxonomy" id="478009"/>
    <lineage>
        <taxon>Archaea</taxon>
        <taxon>Methanobacteriati</taxon>
        <taxon>Methanobacteriota</taxon>
        <taxon>Stenosarchaea group</taxon>
        <taxon>Halobacteria</taxon>
        <taxon>Halobacteriales</taxon>
        <taxon>Halobacteriaceae</taxon>
        <taxon>Halobacterium</taxon>
        <taxon>Halobacterium salinarum NRC-34001</taxon>
    </lineage>
</organism>
<reference key="1">
    <citation type="journal article" date="2008" name="Genomics">
        <title>Evolution in the laboratory: the genome of Halobacterium salinarum strain R1 compared to that of strain NRC-1.</title>
        <authorList>
            <person name="Pfeiffer F."/>
            <person name="Schuster S.C."/>
            <person name="Broicher A."/>
            <person name="Falb M."/>
            <person name="Palm P."/>
            <person name="Rodewald K."/>
            <person name="Ruepp A."/>
            <person name="Soppa J."/>
            <person name="Tittor J."/>
            <person name="Oesterhelt D."/>
        </authorList>
    </citation>
    <scope>NUCLEOTIDE SEQUENCE [LARGE SCALE GENOMIC DNA]</scope>
    <source>
        <strain>ATCC 29341 / DSM 671 / R1</strain>
    </source>
</reference>
<name>TRPA_HALS3</name>
<sequence>MTRSDLAAAFDDGPALVSYVVAGDPTPAATAEYIDALVDGGTDVIELGLPFSEPVAEGTTIQNAIKRALDAGMTPDAYLDLVARIDADVPVVCMTYYNLLFQYGDRAGPAAFVSAAAEAGVSGFVVPDLPVDESGPLREACRAHGLDLVFVVAPTTTADRRERMLDLTTGFVYVQGRVGTTGAREEVSAATPDALAALQHTDIPKAVGFGVSSGEQAREITASGADGVIVGSAYVDTVADGVADDDPPSVVADRLRDLAAELKAGAARGVPEPEHK</sequence>
<gene>
    <name evidence="1" type="primary">trpA</name>
    <name type="ordered locus">OE_1471F</name>
</gene>
<proteinExistence type="inferred from homology"/>
<protein>
    <recommendedName>
        <fullName evidence="1">Tryptophan synthase alpha chain</fullName>
        <ecNumber evidence="1">4.2.1.20</ecNumber>
    </recommendedName>
</protein>
<keyword id="KW-0028">Amino-acid biosynthesis</keyword>
<keyword id="KW-0057">Aromatic amino acid biosynthesis</keyword>
<keyword id="KW-0456">Lyase</keyword>
<keyword id="KW-0822">Tryptophan biosynthesis</keyword>
<comment type="function">
    <text evidence="1">The alpha subunit is responsible for the aldol cleavage of indoleglycerol phosphate to indole and glyceraldehyde 3-phosphate.</text>
</comment>
<comment type="catalytic activity">
    <reaction evidence="1">
        <text>(1S,2R)-1-C-(indol-3-yl)glycerol 3-phosphate + L-serine = D-glyceraldehyde 3-phosphate + L-tryptophan + H2O</text>
        <dbReference type="Rhea" id="RHEA:10532"/>
        <dbReference type="ChEBI" id="CHEBI:15377"/>
        <dbReference type="ChEBI" id="CHEBI:33384"/>
        <dbReference type="ChEBI" id="CHEBI:57912"/>
        <dbReference type="ChEBI" id="CHEBI:58866"/>
        <dbReference type="ChEBI" id="CHEBI:59776"/>
        <dbReference type="EC" id="4.2.1.20"/>
    </reaction>
</comment>
<comment type="pathway">
    <text evidence="1">Amino-acid biosynthesis; L-tryptophan biosynthesis; L-tryptophan from chorismate: step 5/5.</text>
</comment>
<comment type="subunit">
    <text evidence="1">Tetramer of two alpha and two beta chains.</text>
</comment>
<comment type="similarity">
    <text evidence="1">Belongs to the TrpA family.</text>
</comment>
<dbReference type="EC" id="4.2.1.20" evidence="1"/>
<dbReference type="EMBL" id="AM774415">
    <property type="protein sequence ID" value="CAP13143.1"/>
    <property type="molecule type" value="Genomic_DNA"/>
</dbReference>
<dbReference type="RefSeq" id="WP_010902182.1">
    <property type="nucleotide sequence ID" value="NC_010364.1"/>
</dbReference>
<dbReference type="SMR" id="B0R333"/>
<dbReference type="EnsemblBacteria" id="CAP13143">
    <property type="protein sequence ID" value="CAP13143"/>
    <property type="gene ID" value="OE_1471F"/>
</dbReference>
<dbReference type="GeneID" id="68693255"/>
<dbReference type="KEGG" id="hsl:OE_1471F"/>
<dbReference type="HOGENOM" id="CLU_016734_0_0_2"/>
<dbReference type="PhylomeDB" id="B0R333"/>
<dbReference type="UniPathway" id="UPA00035">
    <property type="reaction ID" value="UER00044"/>
</dbReference>
<dbReference type="Proteomes" id="UP000001321">
    <property type="component" value="Chromosome"/>
</dbReference>
<dbReference type="GO" id="GO:0005829">
    <property type="term" value="C:cytosol"/>
    <property type="evidence" value="ECO:0007669"/>
    <property type="project" value="TreeGrafter"/>
</dbReference>
<dbReference type="GO" id="GO:0004834">
    <property type="term" value="F:tryptophan synthase activity"/>
    <property type="evidence" value="ECO:0007669"/>
    <property type="project" value="UniProtKB-UniRule"/>
</dbReference>
<dbReference type="CDD" id="cd04724">
    <property type="entry name" value="Tryptophan_synthase_alpha"/>
    <property type="match status" value="1"/>
</dbReference>
<dbReference type="FunFam" id="3.20.20.70:FF:000037">
    <property type="entry name" value="Tryptophan synthase alpha chain"/>
    <property type="match status" value="1"/>
</dbReference>
<dbReference type="Gene3D" id="3.20.20.70">
    <property type="entry name" value="Aldolase class I"/>
    <property type="match status" value="1"/>
</dbReference>
<dbReference type="HAMAP" id="MF_00131">
    <property type="entry name" value="Trp_synth_alpha"/>
    <property type="match status" value="1"/>
</dbReference>
<dbReference type="InterPro" id="IPR013785">
    <property type="entry name" value="Aldolase_TIM"/>
</dbReference>
<dbReference type="InterPro" id="IPR011060">
    <property type="entry name" value="RibuloseP-bd_barrel"/>
</dbReference>
<dbReference type="InterPro" id="IPR018204">
    <property type="entry name" value="Trp_synthase_alpha_AS"/>
</dbReference>
<dbReference type="InterPro" id="IPR002028">
    <property type="entry name" value="Trp_synthase_suA"/>
</dbReference>
<dbReference type="NCBIfam" id="TIGR00262">
    <property type="entry name" value="trpA"/>
    <property type="match status" value="1"/>
</dbReference>
<dbReference type="PANTHER" id="PTHR43406:SF1">
    <property type="entry name" value="TRYPTOPHAN SYNTHASE ALPHA CHAIN, CHLOROPLASTIC"/>
    <property type="match status" value="1"/>
</dbReference>
<dbReference type="PANTHER" id="PTHR43406">
    <property type="entry name" value="TRYPTOPHAN SYNTHASE, ALPHA CHAIN"/>
    <property type="match status" value="1"/>
</dbReference>
<dbReference type="Pfam" id="PF00290">
    <property type="entry name" value="Trp_syntA"/>
    <property type="match status" value="1"/>
</dbReference>
<dbReference type="SUPFAM" id="SSF51366">
    <property type="entry name" value="Ribulose-phoshate binding barrel"/>
    <property type="match status" value="1"/>
</dbReference>
<dbReference type="PROSITE" id="PS00167">
    <property type="entry name" value="TRP_SYNTHASE_ALPHA"/>
    <property type="match status" value="1"/>
</dbReference>
<accession>B0R333</accession>
<evidence type="ECO:0000255" key="1">
    <source>
        <dbReference type="HAMAP-Rule" id="MF_00131"/>
    </source>
</evidence>